<proteinExistence type="inferred from homology"/>
<keyword id="KW-0472">Membrane</keyword>
<keyword id="KW-0520">NAD</keyword>
<keyword id="KW-0521">NADP</keyword>
<keyword id="KW-0618">Plastoquinone</keyword>
<keyword id="KW-0874">Quinone</keyword>
<keyword id="KW-1185">Reference proteome</keyword>
<keyword id="KW-0793">Thylakoid</keyword>
<keyword id="KW-1278">Translocase</keyword>
<keyword id="KW-0813">Transport</keyword>
<sequence length="121" mass="13946">MLKCTTRHVHIFAGEVTADNNFVPRDDLFTLDVDPDNELVWTDAALQKVYARFEELVEEYRGRDLTEYNIRRIGSDLEHFIRSLLKQGEIAYNLQGRAPNFSMGFPQIPAEEIVGQYIPKG</sequence>
<accession>Q2JNM8</accession>
<protein>
    <recommendedName>
        <fullName evidence="1">NAD(P)H-quinone oxidoreductase subunit M</fullName>
        <ecNumber evidence="1">7.1.1.-</ecNumber>
    </recommendedName>
    <alternativeName>
        <fullName evidence="1">NAD(P)H dehydrogenase I subunit M</fullName>
        <shortName evidence="1">NDH-1 subunit M</shortName>
        <shortName evidence="1">NDH-M</shortName>
    </alternativeName>
</protein>
<reference key="1">
    <citation type="journal article" date="2007" name="ISME J.">
        <title>Population level functional diversity in a microbial community revealed by comparative genomic and metagenomic analyses.</title>
        <authorList>
            <person name="Bhaya D."/>
            <person name="Grossman A.R."/>
            <person name="Steunou A.-S."/>
            <person name="Khuri N."/>
            <person name="Cohan F.M."/>
            <person name="Hamamura N."/>
            <person name="Melendrez M.C."/>
            <person name="Bateson M.M."/>
            <person name="Ward D.M."/>
            <person name="Heidelberg J.F."/>
        </authorList>
    </citation>
    <scope>NUCLEOTIDE SEQUENCE [LARGE SCALE GENOMIC DNA]</scope>
    <source>
        <strain>JA-2-3B'a(2-13)</strain>
    </source>
</reference>
<organism>
    <name type="scientific">Synechococcus sp. (strain JA-2-3B'a(2-13))</name>
    <name type="common">Cyanobacteria bacterium Yellowstone B-Prime</name>
    <dbReference type="NCBI Taxonomy" id="321332"/>
    <lineage>
        <taxon>Bacteria</taxon>
        <taxon>Bacillati</taxon>
        <taxon>Cyanobacteriota</taxon>
        <taxon>Cyanophyceae</taxon>
        <taxon>Synechococcales</taxon>
        <taxon>Synechococcaceae</taxon>
        <taxon>Synechococcus</taxon>
    </lineage>
</organism>
<dbReference type="EC" id="7.1.1.-" evidence="1"/>
<dbReference type="EMBL" id="CP000240">
    <property type="protein sequence ID" value="ABD01631.1"/>
    <property type="molecule type" value="Genomic_DNA"/>
</dbReference>
<dbReference type="RefSeq" id="WP_011432289.1">
    <property type="nucleotide sequence ID" value="NC_007776.1"/>
</dbReference>
<dbReference type="SMR" id="Q2JNM8"/>
<dbReference type="STRING" id="321332.CYB_0644"/>
<dbReference type="KEGG" id="cyb:CYB_0644"/>
<dbReference type="eggNOG" id="ENOG5031AQM">
    <property type="taxonomic scope" value="Bacteria"/>
</dbReference>
<dbReference type="HOGENOM" id="CLU_137431_0_0_3"/>
<dbReference type="OrthoDB" id="461686at2"/>
<dbReference type="Proteomes" id="UP000001938">
    <property type="component" value="Chromosome"/>
</dbReference>
<dbReference type="GO" id="GO:0031676">
    <property type="term" value="C:plasma membrane-derived thylakoid membrane"/>
    <property type="evidence" value="ECO:0007669"/>
    <property type="project" value="UniProtKB-SubCell"/>
</dbReference>
<dbReference type="GO" id="GO:0016655">
    <property type="term" value="F:oxidoreductase activity, acting on NAD(P)H, quinone or similar compound as acceptor"/>
    <property type="evidence" value="ECO:0007669"/>
    <property type="project" value="UniProtKB-UniRule"/>
</dbReference>
<dbReference type="GO" id="GO:0048038">
    <property type="term" value="F:quinone binding"/>
    <property type="evidence" value="ECO:0007669"/>
    <property type="project" value="UniProtKB-KW"/>
</dbReference>
<dbReference type="HAMAP" id="MF_01352">
    <property type="entry name" value="NDH1_NDH1M"/>
    <property type="match status" value="1"/>
</dbReference>
<dbReference type="InterPro" id="IPR018922">
    <property type="entry name" value="NdhM"/>
</dbReference>
<dbReference type="PANTHER" id="PTHR36900">
    <property type="entry name" value="NAD(P)H-QUINONE OXIDOREDUCTASE SUBUNIT M, CHLOROPLASTIC"/>
    <property type="match status" value="1"/>
</dbReference>
<dbReference type="PANTHER" id="PTHR36900:SF1">
    <property type="entry name" value="NAD(P)H-QUINONE OXIDOREDUCTASE SUBUNIT M, CHLOROPLASTIC"/>
    <property type="match status" value="1"/>
</dbReference>
<dbReference type="Pfam" id="PF10664">
    <property type="entry name" value="NdhM"/>
    <property type="match status" value="1"/>
</dbReference>
<feature type="chain" id="PRO_0000352204" description="NAD(P)H-quinone oxidoreductase subunit M">
    <location>
        <begin position="1"/>
        <end position="121"/>
    </location>
</feature>
<name>NDHM_SYNJB</name>
<evidence type="ECO:0000255" key="1">
    <source>
        <dbReference type="HAMAP-Rule" id="MF_01352"/>
    </source>
</evidence>
<gene>
    <name evidence="1" type="primary">ndhM</name>
    <name type="ordered locus">CYB_0644</name>
</gene>
<comment type="function">
    <text evidence="1">NDH-1 shuttles electrons from an unknown electron donor, via FMN and iron-sulfur (Fe-S) centers, to quinones in the respiratory and/or the photosynthetic chain. The immediate electron acceptor for the enzyme in this species is believed to be plastoquinone. Couples the redox reaction to proton translocation, and thus conserves the redox energy in a proton gradient. Cyanobacterial NDH-1 also plays a role in inorganic carbon-concentration.</text>
</comment>
<comment type="catalytic activity">
    <reaction evidence="1">
        <text>a plastoquinone + NADH + (n+1) H(+)(in) = a plastoquinol + NAD(+) + n H(+)(out)</text>
        <dbReference type="Rhea" id="RHEA:42608"/>
        <dbReference type="Rhea" id="RHEA-COMP:9561"/>
        <dbReference type="Rhea" id="RHEA-COMP:9562"/>
        <dbReference type="ChEBI" id="CHEBI:15378"/>
        <dbReference type="ChEBI" id="CHEBI:17757"/>
        <dbReference type="ChEBI" id="CHEBI:57540"/>
        <dbReference type="ChEBI" id="CHEBI:57945"/>
        <dbReference type="ChEBI" id="CHEBI:62192"/>
    </reaction>
</comment>
<comment type="catalytic activity">
    <reaction evidence="1">
        <text>a plastoquinone + NADPH + (n+1) H(+)(in) = a plastoquinol + NADP(+) + n H(+)(out)</text>
        <dbReference type="Rhea" id="RHEA:42612"/>
        <dbReference type="Rhea" id="RHEA-COMP:9561"/>
        <dbReference type="Rhea" id="RHEA-COMP:9562"/>
        <dbReference type="ChEBI" id="CHEBI:15378"/>
        <dbReference type="ChEBI" id="CHEBI:17757"/>
        <dbReference type="ChEBI" id="CHEBI:57783"/>
        <dbReference type="ChEBI" id="CHEBI:58349"/>
        <dbReference type="ChEBI" id="CHEBI:62192"/>
    </reaction>
</comment>
<comment type="subunit">
    <text evidence="1">NDH-1 can be composed of about 15 different subunits; different subcomplexes with different compositions have been identified which probably have different functions.</text>
</comment>
<comment type="subcellular location">
    <subcellularLocation>
        <location evidence="1">Cellular thylakoid membrane</location>
        <topology evidence="1">Peripheral membrane protein</topology>
        <orientation evidence="1">Cytoplasmic side</orientation>
    </subcellularLocation>
</comment>
<comment type="similarity">
    <text evidence="1">Belongs to the complex I NdhM subunit family.</text>
</comment>